<proteinExistence type="inferred from homology"/>
<gene>
    <name type="primary">SPC25</name>
    <name type="ordered locus">CAGL0M11858g</name>
</gene>
<organism>
    <name type="scientific">Candida glabrata (strain ATCC 2001 / BCRC 20586 / JCM 3761 / NBRC 0622 / NRRL Y-65 / CBS 138)</name>
    <name type="common">Yeast</name>
    <name type="synonym">Nakaseomyces glabratus</name>
    <dbReference type="NCBI Taxonomy" id="284593"/>
    <lineage>
        <taxon>Eukaryota</taxon>
        <taxon>Fungi</taxon>
        <taxon>Dikarya</taxon>
        <taxon>Ascomycota</taxon>
        <taxon>Saccharomycotina</taxon>
        <taxon>Saccharomycetes</taxon>
        <taxon>Saccharomycetales</taxon>
        <taxon>Saccharomycetaceae</taxon>
        <taxon>Nakaseomyces</taxon>
    </lineage>
</organism>
<feature type="chain" id="PRO_0000246672" description="Probable kinetochore protein SPC25">
    <location>
        <begin position="1"/>
        <end position="237"/>
    </location>
</feature>
<feature type="coiled-coil region" evidence="3">
    <location>
        <begin position="8"/>
        <end position="134"/>
    </location>
</feature>
<keyword id="KW-0131">Cell cycle</keyword>
<keyword id="KW-0132">Cell division</keyword>
<keyword id="KW-0137">Centromere</keyword>
<keyword id="KW-0158">Chromosome</keyword>
<keyword id="KW-0175">Coiled coil</keyword>
<keyword id="KW-0995">Kinetochore</keyword>
<keyword id="KW-0498">Mitosis</keyword>
<keyword id="KW-0539">Nucleus</keyword>
<keyword id="KW-1185">Reference proteome</keyword>
<accession>Q6FIT7</accession>
<reference key="1">
    <citation type="journal article" date="2004" name="Nature">
        <title>Genome evolution in yeasts.</title>
        <authorList>
            <person name="Dujon B."/>
            <person name="Sherman D."/>
            <person name="Fischer G."/>
            <person name="Durrens P."/>
            <person name="Casaregola S."/>
            <person name="Lafontaine I."/>
            <person name="de Montigny J."/>
            <person name="Marck C."/>
            <person name="Neuveglise C."/>
            <person name="Talla E."/>
            <person name="Goffard N."/>
            <person name="Frangeul L."/>
            <person name="Aigle M."/>
            <person name="Anthouard V."/>
            <person name="Babour A."/>
            <person name="Barbe V."/>
            <person name="Barnay S."/>
            <person name="Blanchin S."/>
            <person name="Beckerich J.-M."/>
            <person name="Beyne E."/>
            <person name="Bleykasten C."/>
            <person name="Boisrame A."/>
            <person name="Boyer J."/>
            <person name="Cattolico L."/>
            <person name="Confanioleri F."/>
            <person name="de Daruvar A."/>
            <person name="Despons L."/>
            <person name="Fabre E."/>
            <person name="Fairhead C."/>
            <person name="Ferry-Dumazet H."/>
            <person name="Groppi A."/>
            <person name="Hantraye F."/>
            <person name="Hennequin C."/>
            <person name="Jauniaux N."/>
            <person name="Joyet P."/>
            <person name="Kachouri R."/>
            <person name="Kerrest A."/>
            <person name="Koszul R."/>
            <person name="Lemaire M."/>
            <person name="Lesur I."/>
            <person name="Ma L."/>
            <person name="Muller H."/>
            <person name="Nicaud J.-M."/>
            <person name="Nikolski M."/>
            <person name="Oztas S."/>
            <person name="Ozier-Kalogeropoulos O."/>
            <person name="Pellenz S."/>
            <person name="Potier S."/>
            <person name="Richard G.-F."/>
            <person name="Straub M.-L."/>
            <person name="Suleau A."/>
            <person name="Swennen D."/>
            <person name="Tekaia F."/>
            <person name="Wesolowski-Louvel M."/>
            <person name="Westhof E."/>
            <person name="Wirth B."/>
            <person name="Zeniou-Meyer M."/>
            <person name="Zivanovic Y."/>
            <person name="Bolotin-Fukuhara M."/>
            <person name="Thierry A."/>
            <person name="Bouchier C."/>
            <person name="Caudron B."/>
            <person name="Scarpelli C."/>
            <person name="Gaillardin C."/>
            <person name="Weissenbach J."/>
            <person name="Wincker P."/>
            <person name="Souciet J.-L."/>
        </authorList>
    </citation>
    <scope>NUCLEOTIDE SEQUENCE [LARGE SCALE GENOMIC DNA]</scope>
    <source>
        <strain>ATCC 2001 / BCRC 20586 / JCM 3761 / NBRC 0622 / NRRL Y-65 / CBS 138</strain>
    </source>
</reference>
<comment type="function">
    <text evidence="1">Acts as a component of the essential kinetochore-associated NDC80 complex, which is required for chromosome segregation and spindle checkpoint activity.</text>
</comment>
<comment type="subunit">
    <text evidence="1">Component of the NDC80 complex, which consists of NDC80, NUF2, SPC24 and SPC25.</text>
</comment>
<comment type="subcellular location">
    <subcellularLocation>
        <location evidence="2">Nucleus</location>
    </subcellularLocation>
    <subcellularLocation>
        <location evidence="2">Chromosome</location>
        <location evidence="2">Centromere</location>
        <location evidence="2">Kinetochore</location>
    </subcellularLocation>
    <text evidence="2">Associated with kinetochores.</text>
</comment>
<comment type="similarity">
    <text evidence="4">Belongs to the SPC25 family.</text>
</comment>
<protein>
    <recommendedName>
        <fullName>Probable kinetochore protein SPC25</fullName>
    </recommendedName>
</protein>
<dbReference type="EMBL" id="CR380959">
    <property type="protein sequence ID" value="CAG62837.1"/>
    <property type="molecule type" value="Genomic_DNA"/>
</dbReference>
<dbReference type="RefSeq" id="XP_449857.1">
    <property type="nucleotide sequence ID" value="XM_449857.1"/>
</dbReference>
<dbReference type="SMR" id="Q6FIT7"/>
<dbReference type="STRING" id="284593.Q6FIT7"/>
<dbReference type="EnsemblFungi" id="CAGL0M11858g-T">
    <property type="protein sequence ID" value="CAGL0M11858g-T-p1"/>
    <property type="gene ID" value="CAGL0M11858g"/>
</dbReference>
<dbReference type="KEGG" id="cgr:2891252"/>
<dbReference type="CGD" id="CAL0137353">
    <property type="gene designation" value="CAGL0M11858g"/>
</dbReference>
<dbReference type="VEuPathDB" id="FungiDB:CAGL0M11858g"/>
<dbReference type="HOGENOM" id="CLU_085127_1_0_1"/>
<dbReference type="InParanoid" id="Q6FIT7"/>
<dbReference type="OMA" id="FRMNLAD"/>
<dbReference type="Proteomes" id="UP000002428">
    <property type="component" value="Chromosome M"/>
</dbReference>
<dbReference type="GO" id="GO:0031262">
    <property type="term" value="C:Ndc80 complex"/>
    <property type="evidence" value="ECO:0000250"/>
    <property type="project" value="UniProtKB"/>
</dbReference>
<dbReference type="GO" id="GO:0005634">
    <property type="term" value="C:nucleus"/>
    <property type="evidence" value="ECO:0007669"/>
    <property type="project" value="UniProtKB-SubCell"/>
</dbReference>
<dbReference type="GO" id="GO:0051301">
    <property type="term" value="P:cell division"/>
    <property type="evidence" value="ECO:0007669"/>
    <property type="project" value="UniProtKB-KW"/>
</dbReference>
<dbReference type="GO" id="GO:0007059">
    <property type="term" value="P:chromosome segregation"/>
    <property type="evidence" value="ECO:0007669"/>
    <property type="project" value="InterPro"/>
</dbReference>
<dbReference type="CDD" id="cd23784">
    <property type="entry name" value="RWD_Spc25"/>
    <property type="match status" value="1"/>
</dbReference>
<dbReference type="Gene3D" id="3.30.457.50">
    <property type="entry name" value="Chromosome segregation protein Spc25"/>
    <property type="match status" value="1"/>
</dbReference>
<dbReference type="InterPro" id="IPR013255">
    <property type="entry name" value="Spc25_C"/>
</dbReference>
<dbReference type="Pfam" id="PF08234">
    <property type="entry name" value="Spindle_Spc25"/>
    <property type="match status" value="1"/>
</dbReference>
<evidence type="ECO:0000250" key="1"/>
<evidence type="ECO:0000250" key="2">
    <source>
        <dbReference type="UniProtKB" id="P40014"/>
    </source>
</evidence>
<evidence type="ECO:0000255" key="3"/>
<evidence type="ECO:0000305" key="4"/>
<name>SPC25_CANGA</name>
<sequence>MENNGKSRGTQLVGQIDDLTRELQDAQKVVVSRINERNRLVSDMMERYRSNLRILQEQRVTVLSELDRYKEEESRMKEALQNLNSTKEEFKREMDAYQLKAEKMRLQKQQLQKQLDDLNKMFADRANEIQKYKEMVTRQRQLDSPEIKLYEKLLGLQIDKADTHMLKFTFTDFGREREYKSVIVDVSQLNDDSSPLRIKEIESGVSASTVNELETVLNQQGIVQFLIEVRKVLVKSE</sequence>